<sequence length="198" mass="23370">MGKQKKTRKYATMKRMLSLRDQRLKEKDRLKPKKKEKKDPSALKEREVPQHPSCLFFQYNTQLGPPYHILVDTNFINFSIKAKLDLVQSMMDCLYAKCIPCITDCVMAEIEKLGQKYRVALRIAKDPRFERLPCTHKGTYADDCLVQRVTQHKCYIVATVDRDLKRRIRKIPGVPIMYISNHRYNIERMPDDYGAPRF</sequence>
<feature type="chain" id="PRO_0000245251" description="rRNA-processing protein FCF1 homolog">
    <location>
        <begin position="1"/>
        <end position="198"/>
    </location>
</feature>
<feature type="domain" description="PINc">
    <location>
        <begin position="67"/>
        <end position="166"/>
    </location>
</feature>
<feature type="region of interest" description="Disordered" evidence="2">
    <location>
        <begin position="22"/>
        <end position="47"/>
    </location>
</feature>
<feature type="compositionally biased region" description="Basic and acidic residues" evidence="2">
    <location>
        <begin position="37"/>
        <end position="47"/>
    </location>
</feature>
<name>FCF1_BOVIN</name>
<organism>
    <name type="scientific">Bos taurus</name>
    <name type="common">Bovine</name>
    <dbReference type="NCBI Taxonomy" id="9913"/>
    <lineage>
        <taxon>Eukaryota</taxon>
        <taxon>Metazoa</taxon>
        <taxon>Chordata</taxon>
        <taxon>Craniata</taxon>
        <taxon>Vertebrata</taxon>
        <taxon>Euteleostomi</taxon>
        <taxon>Mammalia</taxon>
        <taxon>Eutheria</taxon>
        <taxon>Laurasiatheria</taxon>
        <taxon>Artiodactyla</taxon>
        <taxon>Ruminantia</taxon>
        <taxon>Pecora</taxon>
        <taxon>Bovidae</taxon>
        <taxon>Bovinae</taxon>
        <taxon>Bos</taxon>
    </lineage>
</organism>
<proteinExistence type="evidence at transcript level"/>
<comment type="function">
    <text evidence="1">Part of the small subunit (SSU) processome, first precursor of the small eukaryotic ribosomal subunit. During the assembly of the SSU processome in the nucleolus, many ribosome biogenesis factors, an RNA chaperone and ribosomal proteins associate with the nascent pre-rRNA and work in concert to generate RNA folding, modifications, rearrangements and cleavage as well as targeted degradation of pre-ribosomal RNA by the RNA exosome.</text>
</comment>
<comment type="subunit">
    <text evidence="1">Part of the small subunit (SSU) processome, composed of more than 70 proteins and the RNA chaperone small nucleolar RNA (snoRNA) U3.</text>
</comment>
<comment type="subcellular location">
    <subcellularLocation>
        <location evidence="1">Nucleus</location>
        <location evidence="1">Nucleolus</location>
    </subcellularLocation>
</comment>
<comment type="similarity">
    <text evidence="3">Belongs to the UTP23/FCF1 family. FCF1 subfamily.</text>
</comment>
<evidence type="ECO:0000250" key="1">
    <source>
        <dbReference type="UniProtKB" id="Q9Y324"/>
    </source>
</evidence>
<evidence type="ECO:0000256" key="2">
    <source>
        <dbReference type="SAM" id="MobiDB-lite"/>
    </source>
</evidence>
<evidence type="ECO:0000305" key="3"/>
<reference key="1">
    <citation type="submission" date="2005-10" db="EMBL/GenBank/DDBJ databases">
        <authorList>
            <consortium name="NIH - Mammalian Gene Collection (MGC) project"/>
        </authorList>
    </citation>
    <scope>NUCLEOTIDE SEQUENCE [LARGE SCALE MRNA]</scope>
    <source>
        <strain>Crossbred X Angus</strain>
        <tissue>Liver</tissue>
    </source>
</reference>
<protein>
    <recommendedName>
        <fullName>rRNA-processing protein FCF1 homolog</fullName>
    </recommendedName>
</protein>
<accession>Q32PD0</accession>
<dbReference type="EMBL" id="BC108165">
    <property type="protein sequence ID" value="AAI08166.1"/>
    <property type="molecule type" value="mRNA"/>
</dbReference>
<dbReference type="RefSeq" id="NP_001032529.1">
    <property type="nucleotide sequence ID" value="NM_001037452.1"/>
</dbReference>
<dbReference type="SMR" id="Q32PD0"/>
<dbReference type="FunCoup" id="Q32PD0">
    <property type="interactions" value="4499"/>
</dbReference>
<dbReference type="STRING" id="9913.ENSBTAP00000027167"/>
<dbReference type="PaxDb" id="9913-ENSBTAP00000027167"/>
<dbReference type="Ensembl" id="ENSBTAT00000027167.4">
    <property type="protein sequence ID" value="ENSBTAP00000027167.3"/>
    <property type="gene ID" value="ENSBTAG00000020381.5"/>
</dbReference>
<dbReference type="GeneID" id="508270"/>
<dbReference type="KEGG" id="bta:508270"/>
<dbReference type="CTD" id="51077"/>
<dbReference type="VEuPathDB" id="HostDB:ENSBTAG00000020381"/>
<dbReference type="VGNC" id="VGNC:28933">
    <property type="gene designation" value="FCF1"/>
</dbReference>
<dbReference type="eggNOG" id="KOG3165">
    <property type="taxonomic scope" value="Eukaryota"/>
</dbReference>
<dbReference type="GeneTree" id="ENSGT00940000153117"/>
<dbReference type="HOGENOM" id="CLU_081098_0_1_1"/>
<dbReference type="InParanoid" id="Q32PD0"/>
<dbReference type="OMA" id="GMMDCLL"/>
<dbReference type="OrthoDB" id="76105at2759"/>
<dbReference type="TreeFam" id="TF314992"/>
<dbReference type="Reactome" id="R-BTA-6791226">
    <property type="pathway name" value="Major pathway of rRNA processing in the nucleolus and cytosol"/>
</dbReference>
<dbReference type="Proteomes" id="UP000009136">
    <property type="component" value="Chromosome 10"/>
</dbReference>
<dbReference type="Bgee" id="ENSBTAG00000020381">
    <property type="expression patterns" value="Expressed in oocyte and 106 other cell types or tissues"/>
</dbReference>
<dbReference type="GO" id="GO:0005730">
    <property type="term" value="C:nucleolus"/>
    <property type="evidence" value="ECO:0000318"/>
    <property type="project" value="GO_Central"/>
</dbReference>
<dbReference type="GO" id="GO:0032040">
    <property type="term" value="C:small-subunit processome"/>
    <property type="evidence" value="ECO:0000250"/>
    <property type="project" value="UniProtKB"/>
</dbReference>
<dbReference type="GO" id="GO:0042274">
    <property type="term" value="P:ribosomal small subunit biogenesis"/>
    <property type="evidence" value="ECO:0000250"/>
    <property type="project" value="UniProtKB"/>
</dbReference>
<dbReference type="GO" id="GO:0006364">
    <property type="term" value="P:rRNA processing"/>
    <property type="evidence" value="ECO:0007669"/>
    <property type="project" value="UniProtKB-KW"/>
</dbReference>
<dbReference type="CDD" id="cd09864">
    <property type="entry name" value="PIN_Fcf1-like"/>
    <property type="match status" value="1"/>
</dbReference>
<dbReference type="FunFam" id="3.40.50.1010:FF:000004">
    <property type="entry name" value="rRNA-processing protein FCF1 homolog"/>
    <property type="match status" value="1"/>
</dbReference>
<dbReference type="Gene3D" id="3.40.50.1010">
    <property type="entry name" value="5'-nuclease"/>
    <property type="match status" value="1"/>
</dbReference>
<dbReference type="InterPro" id="IPR006984">
    <property type="entry name" value="Fcf1/Utp23"/>
</dbReference>
<dbReference type="InterPro" id="IPR037503">
    <property type="entry name" value="Fcf1_PIN"/>
</dbReference>
<dbReference type="InterPro" id="IPR029060">
    <property type="entry name" value="PIN-like_dom_sf"/>
</dbReference>
<dbReference type="InterPro" id="IPR002716">
    <property type="entry name" value="PIN_dom"/>
</dbReference>
<dbReference type="PANTHER" id="PTHR12416">
    <property type="entry name" value="RRNA-PROCESSING PROTEIN UTP23 HOMOLOG"/>
    <property type="match status" value="1"/>
</dbReference>
<dbReference type="Pfam" id="PF04900">
    <property type="entry name" value="Fcf1"/>
    <property type="match status" value="1"/>
</dbReference>
<dbReference type="SMART" id="SM00670">
    <property type="entry name" value="PINc"/>
    <property type="match status" value="1"/>
</dbReference>
<dbReference type="SUPFAM" id="SSF88723">
    <property type="entry name" value="PIN domain-like"/>
    <property type="match status" value="1"/>
</dbReference>
<gene>
    <name type="primary">FCF1</name>
</gene>
<keyword id="KW-0539">Nucleus</keyword>
<keyword id="KW-1185">Reference proteome</keyword>
<keyword id="KW-0690">Ribosome biogenesis</keyword>
<keyword id="KW-0698">rRNA processing</keyword>